<reference key="1">
    <citation type="journal article" date="2006" name="PLoS Genet.">
        <title>The complete genome sequence and comparative genome analysis of the high pathogenicity Yersinia enterocolitica strain 8081.</title>
        <authorList>
            <person name="Thomson N.R."/>
            <person name="Howard S."/>
            <person name="Wren B.W."/>
            <person name="Holden M.T.G."/>
            <person name="Crossman L."/>
            <person name="Challis G.L."/>
            <person name="Churcher C."/>
            <person name="Mungall K."/>
            <person name="Brooks K."/>
            <person name="Chillingworth T."/>
            <person name="Feltwell T."/>
            <person name="Abdellah Z."/>
            <person name="Hauser H."/>
            <person name="Jagels K."/>
            <person name="Maddison M."/>
            <person name="Moule S."/>
            <person name="Sanders M."/>
            <person name="Whitehead S."/>
            <person name="Quail M.A."/>
            <person name="Dougan G."/>
            <person name="Parkhill J."/>
            <person name="Prentice M.B."/>
        </authorList>
    </citation>
    <scope>NUCLEOTIDE SEQUENCE [LARGE SCALE GENOMIC DNA]</scope>
    <source>
        <strain>NCTC 13174 / 8081</strain>
    </source>
</reference>
<dbReference type="EMBL" id="AM286415">
    <property type="protein sequence ID" value="CAL11567.1"/>
    <property type="molecule type" value="Genomic_DNA"/>
</dbReference>
<dbReference type="RefSeq" id="WP_005171180.1">
    <property type="nucleotide sequence ID" value="NC_008800.1"/>
</dbReference>
<dbReference type="RefSeq" id="YP_001005785.1">
    <property type="nucleotide sequence ID" value="NC_008800.1"/>
</dbReference>
<dbReference type="SMR" id="A1JM45"/>
<dbReference type="KEGG" id="yen:YE1478"/>
<dbReference type="PATRIC" id="fig|393305.7.peg.1608"/>
<dbReference type="eggNOG" id="COG0569">
    <property type="taxonomic scope" value="Bacteria"/>
</dbReference>
<dbReference type="eggNOG" id="COG2985">
    <property type="taxonomic scope" value="Bacteria"/>
</dbReference>
<dbReference type="HOGENOM" id="CLU_035023_2_2_6"/>
<dbReference type="OrthoDB" id="5166626at2"/>
<dbReference type="Proteomes" id="UP000000642">
    <property type="component" value="Chromosome"/>
</dbReference>
<dbReference type="GO" id="GO:0005886">
    <property type="term" value="C:plasma membrane"/>
    <property type="evidence" value="ECO:0007669"/>
    <property type="project" value="UniProtKB-SubCell"/>
</dbReference>
<dbReference type="GO" id="GO:0008324">
    <property type="term" value="F:monoatomic cation transmembrane transporter activity"/>
    <property type="evidence" value="ECO:0007669"/>
    <property type="project" value="InterPro"/>
</dbReference>
<dbReference type="GO" id="GO:0006813">
    <property type="term" value="P:potassium ion transport"/>
    <property type="evidence" value="ECO:0007669"/>
    <property type="project" value="InterPro"/>
</dbReference>
<dbReference type="FunFam" id="3.30.70.1450:FF:000003">
    <property type="entry name" value="Putative transport protein YbjL"/>
    <property type="match status" value="1"/>
</dbReference>
<dbReference type="Gene3D" id="3.30.70.1450">
    <property type="entry name" value="Regulator of K+ conductance, C-terminal domain"/>
    <property type="match status" value="2"/>
</dbReference>
<dbReference type="HAMAP" id="MF_01015">
    <property type="entry name" value="YbjL"/>
    <property type="match status" value="1"/>
</dbReference>
<dbReference type="InterPro" id="IPR050144">
    <property type="entry name" value="AAE_transporter"/>
</dbReference>
<dbReference type="InterPro" id="IPR006037">
    <property type="entry name" value="RCK_C"/>
</dbReference>
<dbReference type="InterPro" id="IPR036721">
    <property type="entry name" value="RCK_C_sf"/>
</dbReference>
<dbReference type="InterPro" id="IPR023017">
    <property type="entry name" value="Transp_YbjL_put"/>
</dbReference>
<dbReference type="InterPro" id="IPR006512">
    <property type="entry name" value="YidE_YbjL"/>
</dbReference>
<dbReference type="NCBIfam" id="NF003440">
    <property type="entry name" value="PRK04972.1"/>
    <property type="match status" value="1"/>
</dbReference>
<dbReference type="NCBIfam" id="TIGR01625">
    <property type="entry name" value="YidE_YbjL_dupl"/>
    <property type="match status" value="2"/>
</dbReference>
<dbReference type="PANTHER" id="PTHR30445">
    <property type="entry name" value="K(+)_H(+) ANTIPORTER SUBUNIT KHTT"/>
    <property type="match status" value="1"/>
</dbReference>
<dbReference type="PANTHER" id="PTHR30445:SF10">
    <property type="entry name" value="TRANSPORT PROTEIN YBJL-RELATED"/>
    <property type="match status" value="1"/>
</dbReference>
<dbReference type="Pfam" id="PF06826">
    <property type="entry name" value="Asp-Al_Ex"/>
    <property type="match status" value="2"/>
</dbReference>
<dbReference type="Pfam" id="PF02080">
    <property type="entry name" value="TrkA_C"/>
    <property type="match status" value="2"/>
</dbReference>
<dbReference type="SUPFAM" id="SSF116726">
    <property type="entry name" value="TrkA C-terminal domain-like"/>
    <property type="match status" value="2"/>
</dbReference>
<dbReference type="PROSITE" id="PS51202">
    <property type="entry name" value="RCK_C"/>
    <property type="match status" value="2"/>
</dbReference>
<name>Y1478_YERE8</name>
<comment type="subcellular location">
    <subcellularLocation>
        <location evidence="1">Cell membrane</location>
        <topology evidence="1">Multi-pass membrane protein</topology>
    </subcellularLocation>
</comment>
<comment type="similarity">
    <text evidence="1">Belongs to the AAE transporter (TC 2.A.81) family. YbjL subfamily.</text>
</comment>
<evidence type="ECO:0000255" key="1">
    <source>
        <dbReference type="HAMAP-Rule" id="MF_01015"/>
    </source>
</evidence>
<accession>A1JM45</accession>
<proteinExistence type="inferred from homology"/>
<gene>
    <name type="ordered locus">YE1478</name>
</gene>
<keyword id="KW-1003">Cell membrane</keyword>
<keyword id="KW-0472">Membrane</keyword>
<keyword id="KW-0677">Repeat</keyword>
<keyword id="KW-0812">Transmembrane</keyword>
<keyword id="KW-1133">Transmembrane helix</keyword>
<keyword id="KW-0813">Transport</keyword>
<protein>
    <recommendedName>
        <fullName evidence="1">Putative transport protein YE1478</fullName>
    </recommendedName>
</protein>
<organism>
    <name type="scientific">Yersinia enterocolitica serotype O:8 / biotype 1B (strain NCTC 13174 / 8081)</name>
    <dbReference type="NCBI Taxonomy" id="393305"/>
    <lineage>
        <taxon>Bacteria</taxon>
        <taxon>Pseudomonadati</taxon>
        <taxon>Pseudomonadota</taxon>
        <taxon>Gammaproteobacteria</taxon>
        <taxon>Enterobacterales</taxon>
        <taxon>Yersiniaceae</taxon>
        <taxon>Yersinia</taxon>
    </lineage>
</organism>
<sequence length="562" mass="60300">MNINVANLLNGNYILLLFVVLALGLCLGKLRLGPIQLGNAIGVLVVSLLLGQQHFTINTEALNLGFMLFIFCVGVEAGPNFFSIFFRDGKNYLMLALVMVGSAMVLALGLGKLFGWDIGLTAGMLAGSMTSTPVLVGAGDTLRHTIANNPALQHAQDNLSLGYALTYLIGLVSLILGARYLPKLQHQDLPTSAQQIARERGLDTDSQRKVYLPVIRAYRVGPELVAWADGKNLRELGIYRQTGCYIERIRRNGILANPDGDAVLQVGDEISLVGYPDAHSRLDPSFRNGKEVFDRDLLDMRIVTEEIVVKNSNAVGKRLSHLKLTDHGCFLNRVIRSQIEMPIDDNVVLNKGDVLQVSGDARRVKSVAEKIGFISIHSQVTDLLAFCAFFILGLMIGLITFQFSNFSFGIGNAAGLLMAGIMLGFLRANHPTFGYIPQGALNMVKEFGLMVFMAGVGLSAGGGINSSLGAVGGQMLISGLIVSLVPVVICFIFGAYVLRMNRALLFGAIMGARTCAPAMDIISDTARSNIPALGYAGTYAIANVLLTLAGSLIVIVWPGILG</sequence>
<feature type="chain" id="PRO_0000329151" description="Putative transport protein YE1478">
    <location>
        <begin position="1"/>
        <end position="562"/>
    </location>
</feature>
<feature type="transmembrane region" description="Helical" evidence="1">
    <location>
        <begin position="8"/>
        <end position="28"/>
    </location>
</feature>
<feature type="transmembrane region" description="Helical" evidence="1">
    <location>
        <begin position="32"/>
        <end position="52"/>
    </location>
</feature>
<feature type="transmembrane region" description="Helical" evidence="1">
    <location>
        <begin position="66"/>
        <end position="86"/>
    </location>
</feature>
<feature type="transmembrane region" description="Helical" evidence="1">
    <location>
        <begin position="94"/>
        <end position="114"/>
    </location>
</feature>
<feature type="transmembrane region" description="Helical" evidence="1">
    <location>
        <begin position="118"/>
        <end position="138"/>
    </location>
</feature>
<feature type="transmembrane region" description="Helical" evidence="1">
    <location>
        <begin position="158"/>
        <end position="178"/>
    </location>
</feature>
<feature type="transmembrane region" description="Helical" evidence="1">
    <location>
        <begin position="383"/>
        <end position="403"/>
    </location>
</feature>
<feature type="transmembrane region" description="Helical" evidence="1">
    <location>
        <begin position="406"/>
        <end position="426"/>
    </location>
</feature>
<feature type="transmembrane region" description="Helical" evidence="1">
    <location>
        <begin position="447"/>
        <end position="467"/>
    </location>
</feature>
<feature type="transmembrane region" description="Helical" evidence="1">
    <location>
        <begin position="475"/>
        <end position="495"/>
    </location>
</feature>
<feature type="transmembrane region" description="Helical" evidence="1">
    <location>
        <begin position="541"/>
        <end position="561"/>
    </location>
</feature>
<feature type="domain" description="RCK C-terminal 1" evidence="1">
    <location>
        <begin position="202"/>
        <end position="288"/>
    </location>
</feature>
<feature type="domain" description="RCK C-terminal 2" evidence="1">
    <location>
        <begin position="290"/>
        <end position="373"/>
    </location>
</feature>